<accession>P56853</accession>
<protein>
    <recommendedName>
        <fullName>Kappa-theraphotoxin-Gr1b</fullName>
        <shortName>Kappa-TRTX-Gr1b</shortName>
    </recommendedName>
    <alternativeName>
        <fullName evidence="2">Hanatoxin-2</fullName>
        <shortName evidence="2">HaTx2</shortName>
    </alternativeName>
</protein>
<sequence length="35" mass="4105">ECRYLFGGCKTTADCCKHLGCKFRDKYCAWDFTFS</sequence>
<organism>
    <name type="scientific">Grammostola rosea</name>
    <name type="common">Chilean rose tarantula</name>
    <name type="synonym">Grammostola spatulata</name>
    <dbReference type="NCBI Taxonomy" id="432528"/>
    <lineage>
        <taxon>Eukaryota</taxon>
        <taxon>Metazoa</taxon>
        <taxon>Ecdysozoa</taxon>
        <taxon>Arthropoda</taxon>
        <taxon>Chelicerata</taxon>
        <taxon>Arachnida</taxon>
        <taxon>Araneae</taxon>
        <taxon>Mygalomorphae</taxon>
        <taxon>Theraphosidae</taxon>
        <taxon>Grammostola</taxon>
    </lineage>
</organism>
<dbReference type="SMR" id="P56853"/>
<dbReference type="ArachnoServer" id="AS000343">
    <property type="toxin name" value="kappa-theraphotoxin-Gr1b"/>
</dbReference>
<dbReference type="GO" id="GO:0005576">
    <property type="term" value="C:extracellular region"/>
    <property type="evidence" value="ECO:0007669"/>
    <property type="project" value="UniProtKB-SubCell"/>
</dbReference>
<dbReference type="GO" id="GO:0008200">
    <property type="term" value="F:ion channel inhibitor activity"/>
    <property type="evidence" value="ECO:0007669"/>
    <property type="project" value="InterPro"/>
</dbReference>
<dbReference type="GO" id="GO:0015459">
    <property type="term" value="F:potassium channel regulator activity"/>
    <property type="evidence" value="ECO:0007669"/>
    <property type="project" value="UniProtKB-KW"/>
</dbReference>
<dbReference type="GO" id="GO:0090729">
    <property type="term" value="F:toxin activity"/>
    <property type="evidence" value="ECO:0007669"/>
    <property type="project" value="UniProtKB-KW"/>
</dbReference>
<dbReference type="InterPro" id="IPR011696">
    <property type="entry name" value="Huwentoxin-1"/>
</dbReference>
<dbReference type="Pfam" id="PF07740">
    <property type="entry name" value="Toxin_12"/>
    <property type="match status" value="1"/>
</dbReference>
<dbReference type="SUPFAM" id="SSF57059">
    <property type="entry name" value="omega toxin-like"/>
    <property type="match status" value="1"/>
</dbReference>
<evidence type="ECO:0000250" key="1"/>
<evidence type="ECO:0000303" key="2">
    <source>
    </source>
</evidence>
<evidence type="ECO:0000305" key="3"/>
<proteinExistence type="evidence at protein level"/>
<comment type="function">
    <text>Inhibitor of voltage-gated potassium channels. Inhibits Kv2.1/KCNB1 channels, by shifting activation of the channel to more depolarized voltages. The toxin binding sites may be situated on the S3-S4 extracellular linker of the channel. One, two, three or four toxin molecules may bind the Kv2.1/KCNB1 channel. May need to partition into the membrane in order to bind to the channel. Antibacterial activity is not observed.</text>
</comment>
<comment type="subcellular location">
    <subcellularLocation>
        <location>Secreted</location>
    </subcellularLocation>
</comment>
<comment type="tissue specificity">
    <text>Expressed by the venom gland.</text>
</comment>
<comment type="domain">
    <text evidence="1">The presence of a 'disulfide through disulfide knot' structurally defines this protein as a knottin.</text>
</comment>
<comment type="similarity">
    <text evidence="3">Belongs to the neurotoxin 10 (Hwtx-1) family. 09 (HaTx) subfamily.</text>
</comment>
<feature type="peptide" id="PRO_0000045013" description="Kappa-theraphotoxin-Gr1b">
    <location>
        <begin position="1"/>
        <end position="35"/>
    </location>
</feature>
<feature type="region of interest" description="Involved in active face" evidence="1">
    <location>
        <begin position="4"/>
        <end position="6"/>
    </location>
</feature>
<feature type="site" description="May be involved in interaction with voltage sensor" evidence="1">
    <location>
        <position position="3"/>
    </location>
</feature>
<feature type="site" description="May be involved in interaction with voltage sensor" evidence="1">
    <location>
        <position position="22"/>
    </location>
</feature>
<feature type="site" description="Involved in active face" evidence="1">
    <location>
        <position position="30"/>
    </location>
</feature>
<feature type="disulfide bond" evidence="1">
    <location>
        <begin position="2"/>
        <end position="16"/>
    </location>
</feature>
<feature type="disulfide bond" evidence="1">
    <location>
        <begin position="9"/>
        <end position="21"/>
    </location>
</feature>
<feature type="disulfide bond" evidence="1">
    <location>
        <begin position="15"/>
        <end position="28"/>
    </location>
</feature>
<reference key="1">
    <citation type="journal article" date="1995" name="Neuron">
        <title>An inhibitor of the Kv2.1 potassium channel isolated from the venom of a Chilean tarantula.</title>
        <authorList>
            <person name="Swartz K.J."/>
            <person name="MacKinnon R."/>
        </authorList>
    </citation>
    <scope>PROTEIN SEQUENCE</scope>
    <source>
        <tissue>Venom</tissue>
    </source>
</reference>
<name>TXHN2_GRARO</name>
<keyword id="KW-0903">Direct protein sequencing</keyword>
<keyword id="KW-1015">Disulfide bond</keyword>
<keyword id="KW-0872">Ion channel impairing toxin</keyword>
<keyword id="KW-0960">Knottin</keyword>
<keyword id="KW-0528">Neurotoxin</keyword>
<keyword id="KW-0632">Potassium channel impairing toxin</keyword>
<keyword id="KW-0964">Secreted</keyword>
<keyword id="KW-0800">Toxin</keyword>
<keyword id="KW-1220">Voltage-gated potassium channel impairing toxin</keyword>